<feature type="signal peptide" evidence="1">
    <location>
        <begin position="1"/>
        <end position="29"/>
    </location>
</feature>
<feature type="chain" id="PRO_0000427709" description="Putative lipoprotein LpqE">
    <location>
        <begin position="30"/>
        <end position="182"/>
    </location>
</feature>
<feature type="lipid moiety-binding region" description="N-palmitoyl cysteine" evidence="1">
    <location>
        <position position="30"/>
    </location>
</feature>
<feature type="lipid moiety-binding region" description="S-diacylglycerol cysteine" evidence="1">
    <location>
        <position position="30"/>
    </location>
</feature>
<gene>
    <name type="primary">lpqE</name>
    <name type="ordered locus">MT3690</name>
</gene>
<sequence length="182" mass="18819">MNRCNIRLRLAGMTTWVASIALLAAALSGCGAGQISQTANQKPAVNGNRLTINNVLLRDIRIQAVQTSDFIQPGKAVDLVLVAVNQSPDVSDRLVGITSDIGSVTVAGDARLPASGMLFVGTPDGQIVAPGPLPSNQAAKATVNLTKPIANGLTYNFTFKFEKAGQGSVMVPISAGLATPHE</sequence>
<comment type="subcellular location">
    <subcellularLocation>
        <location evidence="1">Cell membrane</location>
        <topology evidence="1">Lipid-anchor</topology>
    </subcellularLocation>
</comment>
<comment type="sequence caution" evidence="2">
    <conflict type="erroneous initiation">
        <sequence resource="EMBL-CDS" id="AAK48048"/>
    </conflict>
</comment>
<name>LPQE_MYCTO</name>
<organism>
    <name type="scientific">Mycobacterium tuberculosis (strain CDC 1551 / Oshkosh)</name>
    <dbReference type="NCBI Taxonomy" id="83331"/>
    <lineage>
        <taxon>Bacteria</taxon>
        <taxon>Bacillati</taxon>
        <taxon>Actinomycetota</taxon>
        <taxon>Actinomycetes</taxon>
        <taxon>Mycobacteriales</taxon>
        <taxon>Mycobacteriaceae</taxon>
        <taxon>Mycobacterium</taxon>
        <taxon>Mycobacterium tuberculosis complex</taxon>
    </lineage>
</organism>
<dbReference type="EMBL" id="AE000516">
    <property type="protein sequence ID" value="AAK48048.1"/>
    <property type="status" value="ALT_INIT"/>
    <property type="molecule type" value="Genomic_DNA"/>
</dbReference>
<dbReference type="PIR" id="A70804">
    <property type="entry name" value="A70804"/>
</dbReference>
<dbReference type="RefSeq" id="WP_003900715.1">
    <property type="nucleotide sequence ID" value="NZ_KK341227.1"/>
</dbReference>
<dbReference type="SMR" id="P9WK62"/>
<dbReference type="KEGG" id="mtc:MT3690"/>
<dbReference type="PATRIC" id="fig|83331.31.peg.3973"/>
<dbReference type="HOGENOM" id="CLU_089306_0_0_11"/>
<dbReference type="Proteomes" id="UP000001020">
    <property type="component" value="Chromosome"/>
</dbReference>
<dbReference type="GO" id="GO:0005886">
    <property type="term" value="C:plasma membrane"/>
    <property type="evidence" value="ECO:0007669"/>
    <property type="project" value="UniProtKB-SubCell"/>
</dbReference>
<dbReference type="PROSITE" id="PS51257">
    <property type="entry name" value="PROKAR_LIPOPROTEIN"/>
    <property type="match status" value="1"/>
</dbReference>
<keyword id="KW-1003">Cell membrane</keyword>
<keyword id="KW-0449">Lipoprotein</keyword>
<keyword id="KW-0472">Membrane</keyword>
<keyword id="KW-0564">Palmitate</keyword>
<keyword id="KW-1185">Reference proteome</keyword>
<keyword id="KW-0732">Signal</keyword>
<protein>
    <recommendedName>
        <fullName>Putative lipoprotein LpqE</fullName>
    </recommendedName>
</protein>
<evidence type="ECO:0000255" key="1">
    <source>
        <dbReference type="PROSITE-ProRule" id="PRU00303"/>
    </source>
</evidence>
<evidence type="ECO:0000305" key="2"/>
<accession>P9WK62</accession>
<accession>L0TEK8</accession>
<accession>O53569</accession>
<accession>P65308</accession>
<proteinExistence type="inferred from homology"/>
<reference key="1">
    <citation type="journal article" date="2002" name="J. Bacteriol.">
        <title>Whole-genome comparison of Mycobacterium tuberculosis clinical and laboratory strains.</title>
        <authorList>
            <person name="Fleischmann R.D."/>
            <person name="Alland D."/>
            <person name="Eisen J.A."/>
            <person name="Carpenter L."/>
            <person name="White O."/>
            <person name="Peterson J.D."/>
            <person name="DeBoy R.T."/>
            <person name="Dodson R.J."/>
            <person name="Gwinn M.L."/>
            <person name="Haft D.H."/>
            <person name="Hickey E.K."/>
            <person name="Kolonay J.F."/>
            <person name="Nelson W.C."/>
            <person name="Umayam L.A."/>
            <person name="Ermolaeva M.D."/>
            <person name="Salzberg S.L."/>
            <person name="Delcher A."/>
            <person name="Utterback T.R."/>
            <person name="Weidman J.F."/>
            <person name="Khouri H.M."/>
            <person name="Gill J."/>
            <person name="Mikula A."/>
            <person name="Bishai W."/>
            <person name="Jacobs W.R. Jr."/>
            <person name="Venter J.C."/>
            <person name="Fraser C.M."/>
        </authorList>
    </citation>
    <scope>NUCLEOTIDE SEQUENCE [LARGE SCALE GENOMIC DNA]</scope>
    <source>
        <strain>CDC 1551 / Oshkosh</strain>
    </source>
</reference>